<sequence length="132" mass="15398">MYLENYKRFEAIIDKLREFEGAIIVEGARDEASLRKLGVRAEIIKLSRLPLPEVALIASEYDEVMILTDLDRKGEELARKLAWYLEGYGCKVDTETRRELKMIAKKDIKGIEDLYSLYLRVSLRFWPPEEGI</sequence>
<reference key="1">
    <citation type="journal article" date="1998" name="DNA Res.">
        <title>Complete sequence and gene organization of the genome of a hyper-thermophilic archaebacterium, Pyrococcus horikoshii OT3.</title>
        <authorList>
            <person name="Kawarabayasi Y."/>
            <person name="Sawada M."/>
            <person name="Horikawa H."/>
            <person name="Haikawa Y."/>
            <person name="Hino Y."/>
            <person name="Yamamoto S."/>
            <person name="Sekine M."/>
            <person name="Baba S."/>
            <person name="Kosugi H."/>
            <person name="Hosoyama A."/>
            <person name="Nagai Y."/>
            <person name="Sakai M."/>
            <person name="Ogura K."/>
            <person name="Otsuka R."/>
            <person name="Nakazawa H."/>
            <person name="Takamiya M."/>
            <person name="Ohfuku Y."/>
            <person name="Funahashi T."/>
            <person name="Tanaka T."/>
            <person name="Kudoh Y."/>
            <person name="Yamazaki J."/>
            <person name="Kushida N."/>
            <person name="Oguchi A."/>
            <person name="Aoki K."/>
            <person name="Yoshizawa T."/>
            <person name="Nakamura Y."/>
            <person name="Robb F.T."/>
            <person name="Horikoshi K."/>
            <person name="Masuchi Y."/>
            <person name="Shizuya H."/>
            <person name="Kikuchi H."/>
        </authorList>
    </citation>
    <scope>NUCLEOTIDE SEQUENCE [LARGE SCALE GENOMIC DNA]</scope>
    <source>
        <strain>ATCC 700860 / DSM 12428 / JCM 9974 / NBRC 100139 / OT-3</strain>
    </source>
</reference>
<organism>
    <name type="scientific">Pyrococcus horikoshii (strain ATCC 700860 / DSM 12428 / JCM 9974 / NBRC 100139 / OT-3)</name>
    <dbReference type="NCBI Taxonomy" id="70601"/>
    <lineage>
        <taxon>Archaea</taxon>
        <taxon>Methanobacteriati</taxon>
        <taxon>Methanobacteriota</taxon>
        <taxon>Thermococci</taxon>
        <taxon>Thermococcales</taxon>
        <taxon>Thermococcaceae</taxon>
        <taxon>Pyrococcus</taxon>
    </lineage>
</organism>
<feature type="chain" id="PRO_0000143956" description="UPF0292 protein PH1700">
    <location>
        <begin position="1"/>
        <end position="132"/>
    </location>
</feature>
<feature type="domain" description="Toprim" evidence="1">
    <location>
        <begin position="20"/>
        <end position="100"/>
    </location>
</feature>
<feature type="binding site" evidence="1">
    <location>
        <position position="26"/>
    </location>
    <ligand>
        <name>Mg(2+)</name>
        <dbReference type="ChEBI" id="CHEBI:18420"/>
        <label>1</label>
        <note>catalytic</note>
    </ligand>
</feature>
<feature type="binding site" evidence="1">
    <location>
        <position position="69"/>
    </location>
    <ligand>
        <name>Mg(2+)</name>
        <dbReference type="ChEBI" id="CHEBI:18420"/>
        <label>1</label>
        <note>catalytic</note>
    </ligand>
</feature>
<feature type="binding site" evidence="1">
    <location>
        <position position="69"/>
    </location>
    <ligand>
        <name>Mg(2+)</name>
        <dbReference type="ChEBI" id="CHEBI:18420"/>
        <label>2</label>
    </ligand>
</feature>
<feature type="binding site" evidence="1">
    <location>
        <position position="71"/>
    </location>
    <ligand>
        <name>Mg(2+)</name>
        <dbReference type="ChEBI" id="CHEBI:18420"/>
        <label>2</label>
    </ligand>
</feature>
<dbReference type="EMBL" id="BA000001">
    <property type="protein sequence ID" value="BAA30813.1"/>
    <property type="molecule type" value="Genomic_DNA"/>
</dbReference>
<dbReference type="PIR" id="F71177">
    <property type="entry name" value="F71177"/>
</dbReference>
<dbReference type="RefSeq" id="WP_010885765.1">
    <property type="nucleotide sequence ID" value="NC_000961.1"/>
</dbReference>
<dbReference type="SMR" id="O59361"/>
<dbReference type="STRING" id="70601.gene:9378695"/>
<dbReference type="EnsemblBacteria" id="BAA30813">
    <property type="protein sequence ID" value="BAA30813"/>
    <property type="gene ID" value="BAA30813"/>
</dbReference>
<dbReference type="GeneID" id="1442546"/>
<dbReference type="KEGG" id="pho:PH1700"/>
<dbReference type="eggNOG" id="arCOG01486">
    <property type="taxonomic scope" value="Archaea"/>
</dbReference>
<dbReference type="OrthoDB" id="56459at2157"/>
<dbReference type="Proteomes" id="UP000000752">
    <property type="component" value="Chromosome"/>
</dbReference>
<dbReference type="GO" id="GO:0046872">
    <property type="term" value="F:metal ion binding"/>
    <property type="evidence" value="ECO:0007669"/>
    <property type="project" value="UniProtKB-KW"/>
</dbReference>
<dbReference type="CDD" id="cd01027">
    <property type="entry name" value="TOPRIM_RNase_M5_like"/>
    <property type="match status" value="1"/>
</dbReference>
<dbReference type="Gene3D" id="3.40.1360.10">
    <property type="match status" value="1"/>
</dbReference>
<dbReference type="HAMAP" id="MF_01095">
    <property type="entry name" value="UPF0292"/>
    <property type="match status" value="1"/>
</dbReference>
<dbReference type="InterPro" id="IPR006171">
    <property type="entry name" value="TOPRIM_dom"/>
</dbReference>
<dbReference type="InterPro" id="IPR034141">
    <property type="entry name" value="TOPRIM_RNase_M5-like"/>
</dbReference>
<dbReference type="InterPro" id="IPR022972">
    <property type="entry name" value="UPF0292"/>
</dbReference>
<dbReference type="NCBIfam" id="NF003090">
    <property type="entry name" value="PRK04017.1-1"/>
    <property type="match status" value="1"/>
</dbReference>
<dbReference type="PANTHER" id="PTHR39964:SF2">
    <property type="entry name" value="UPF0292 PROTEIN MJ1624"/>
    <property type="match status" value="1"/>
</dbReference>
<dbReference type="PANTHER" id="PTHR39964">
    <property type="entry name" value="UPF0292 PROTEIN TK1411"/>
    <property type="match status" value="1"/>
</dbReference>
<dbReference type="Pfam" id="PF01751">
    <property type="entry name" value="Toprim"/>
    <property type="match status" value="1"/>
</dbReference>
<dbReference type="SMART" id="SM00493">
    <property type="entry name" value="TOPRIM"/>
    <property type="match status" value="1"/>
</dbReference>
<dbReference type="SUPFAM" id="SSF110455">
    <property type="entry name" value="Toprim domain"/>
    <property type="match status" value="1"/>
</dbReference>
<dbReference type="PROSITE" id="PS50880">
    <property type="entry name" value="TOPRIM"/>
    <property type="match status" value="1"/>
</dbReference>
<comment type="cofactor">
    <cofactor evidence="1">
        <name>Mg(2+)</name>
        <dbReference type="ChEBI" id="CHEBI:18420"/>
    </cofactor>
    <text evidence="1">Binds two Mg(2+) per subunit.</text>
</comment>
<comment type="similarity">
    <text evidence="1">Belongs to the UPF0292 family.</text>
</comment>
<keyword id="KW-0460">Magnesium</keyword>
<keyword id="KW-0479">Metal-binding</keyword>
<protein>
    <recommendedName>
        <fullName evidence="1">UPF0292 protein PH1700</fullName>
    </recommendedName>
</protein>
<accession>O59361</accession>
<gene>
    <name type="ordered locus">PH1700</name>
</gene>
<proteinExistence type="inferred from homology"/>
<name>Y1700_PYRHO</name>
<evidence type="ECO:0000255" key="1">
    <source>
        <dbReference type="HAMAP-Rule" id="MF_01095"/>
    </source>
</evidence>